<gene>
    <name type="primary">CLCNKB</name>
</gene>
<keyword id="KW-0106">Calcium</keyword>
<keyword id="KW-0129">CBS domain</keyword>
<keyword id="KW-1003">Cell membrane</keyword>
<keyword id="KW-0868">Chloride</keyword>
<keyword id="KW-0869">Chloride channel</keyword>
<keyword id="KW-0325">Glycoprotein</keyword>
<keyword id="KW-0407">Ion channel</keyword>
<keyword id="KW-0406">Ion transport</keyword>
<keyword id="KW-0472">Membrane</keyword>
<keyword id="KW-0479">Metal-binding</keyword>
<keyword id="KW-1185">Reference proteome</keyword>
<keyword id="KW-0677">Repeat</keyword>
<keyword id="KW-0812">Transmembrane</keyword>
<keyword id="KW-1133">Transmembrane helix</keyword>
<keyword id="KW-0813">Transport</keyword>
<proteinExistence type="evidence at transcript level"/>
<dbReference type="EMBL" id="U36790">
    <property type="protein sequence ID" value="AAC48493.1"/>
    <property type="molecule type" value="mRNA"/>
</dbReference>
<dbReference type="SMR" id="P51804"/>
<dbReference type="FunCoup" id="P51804">
    <property type="interactions" value="5"/>
</dbReference>
<dbReference type="GlyCosmos" id="P51804">
    <property type="glycosylation" value="1 site, No reported glycans"/>
</dbReference>
<dbReference type="InParanoid" id="P51804"/>
<dbReference type="Proteomes" id="UP000001811">
    <property type="component" value="Unplaced"/>
</dbReference>
<dbReference type="GO" id="GO:0016323">
    <property type="term" value="C:basolateral plasma membrane"/>
    <property type="evidence" value="ECO:0007669"/>
    <property type="project" value="UniProtKB-SubCell"/>
</dbReference>
<dbReference type="GO" id="GO:0034707">
    <property type="term" value="C:chloride channel complex"/>
    <property type="evidence" value="ECO:0007669"/>
    <property type="project" value="UniProtKB-KW"/>
</dbReference>
<dbReference type="GO" id="GO:0046872">
    <property type="term" value="F:metal ion binding"/>
    <property type="evidence" value="ECO:0007669"/>
    <property type="project" value="UniProtKB-KW"/>
</dbReference>
<dbReference type="GO" id="GO:0005247">
    <property type="term" value="F:voltage-gated chloride channel activity"/>
    <property type="evidence" value="ECO:0007669"/>
    <property type="project" value="InterPro"/>
</dbReference>
<dbReference type="GO" id="GO:0030321">
    <property type="term" value="P:transepithelial chloride transport"/>
    <property type="evidence" value="ECO:0007669"/>
    <property type="project" value="UniProtKB-ARBA"/>
</dbReference>
<dbReference type="CDD" id="cd04591">
    <property type="entry name" value="CBS_pair_voltage-gated_CLC_euk_bac"/>
    <property type="match status" value="1"/>
</dbReference>
<dbReference type="CDD" id="cd03683">
    <property type="entry name" value="ClC_1_like"/>
    <property type="match status" value="1"/>
</dbReference>
<dbReference type="FunFam" id="1.10.3080.10:FF:000012">
    <property type="entry name" value="Chloride channel K"/>
    <property type="match status" value="1"/>
</dbReference>
<dbReference type="FunFam" id="3.10.580.10:FF:000028">
    <property type="entry name" value="Chloride channel protein"/>
    <property type="match status" value="1"/>
</dbReference>
<dbReference type="Gene3D" id="3.10.580.10">
    <property type="entry name" value="CBS-domain"/>
    <property type="match status" value="1"/>
</dbReference>
<dbReference type="Gene3D" id="1.10.3080.10">
    <property type="entry name" value="Clc chloride channel"/>
    <property type="match status" value="1"/>
</dbReference>
<dbReference type="InterPro" id="IPR000644">
    <property type="entry name" value="CBS_dom"/>
</dbReference>
<dbReference type="InterPro" id="IPR046342">
    <property type="entry name" value="CBS_dom_sf"/>
</dbReference>
<dbReference type="InterPro" id="IPR014743">
    <property type="entry name" value="Cl-channel_core"/>
</dbReference>
<dbReference type="InterPro" id="IPR002250">
    <property type="entry name" value="Cl_channel-K"/>
</dbReference>
<dbReference type="InterPro" id="IPR050970">
    <property type="entry name" value="Cl_channel_volt-gated"/>
</dbReference>
<dbReference type="InterPro" id="IPR001807">
    <property type="entry name" value="ClC"/>
</dbReference>
<dbReference type="PANTHER" id="PTHR45720">
    <property type="entry name" value="CHLORIDE CHANNEL PROTEIN 2"/>
    <property type="match status" value="1"/>
</dbReference>
<dbReference type="PANTHER" id="PTHR45720:SF3">
    <property type="entry name" value="CHLORIDE CHANNEL PROTEIN CLC-KB"/>
    <property type="match status" value="1"/>
</dbReference>
<dbReference type="Pfam" id="PF00654">
    <property type="entry name" value="Voltage_CLC"/>
    <property type="match status" value="1"/>
</dbReference>
<dbReference type="PRINTS" id="PR00762">
    <property type="entry name" value="CLCHANNEL"/>
</dbReference>
<dbReference type="PRINTS" id="PR01119">
    <property type="entry name" value="CLCHANNELKDY"/>
</dbReference>
<dbReference type="SUPFAM" id="SSF54631">
    <property type="entry name" value="CBS-domain pair"/>
    <property type="match status" value="1"/>
</dbReference>
<dbReference type="SUPFAM" id="SSF81340">
    <property type="entry name" value="Clc chloride channel"/>
    <property type="match status" value="1"/>
</dbReference>
<dbReference type="PROSITE" id="PS51371">
    <property type="entry name" value="CBS"/>
    <property type="match status" value="1"/>
</dbReference>
<organism>
    <name type="scientific">Oryctolagus cuniculus</name>
    <name type="common">Rabbit</name>
    <dbReference type="NCBI Taxonomy" id="9986"/>
    <lineage>
        <taxon>Eukaryota</taxon>
        <taxon>Metazoa</taxon>
        <taxon>Chordata</taxon>
        <taxon>Craniata</taxon>
        <taxon>Vertebrata</taxon>
        <taxon>Euteleostomi</taxon>
        <taxon>Mammalia</taxon>
        <taxon>Eutheria</taxon>
        <taxon>Euarchontoglires</taxon>
        <taxon>Glires</taxon>
        <taxon>Lagomorpha</taxon>
        <taxon>Leporidae</taxon>
        <taxon>Oryctolagus</taxon>
    </lineage>
</organism>
<name>CLCKB_RABIT</name>
<evidence type="ECO:0000250" key="1"/>
<evidence type="ECO:0000250" key="2">
    <source>
        <dbReference type="UniProtKB" id="P35523"/>
    </source>
</evidence>
<evidence type="ECO:0000250" key="3">
    <source>
        <dbReference type="UniProtKB" id="P37019"/>
    </source>
</evidence>
<evidence type="ECO:0000250" key="4">
    <source>
        <dbReference type="UniProtKB" id="P51800"/>
    </source>
</evidence>
<evidence type="ECO:0000250" key="5">
    <source>
        <dbReference type="UniProtKB" id="P51801"/>
    </source>
</evidence>
<evidence type="ECO:0000250" key="6">
    <source>
        <dbReference type="UniProtKB" id="Q9WUB6"/>
    </source>
</evidence>
<evidence type="ECO:0000255" key="7"/>
<evidence type="ECO:0000255" key="8">
    <source>
        <dbReference type="PROSITE-ProRule" id="PRU00703"/>
    </source>
</evidence>
<evidence type="ECO:0000269" key="9">
    <source>
    </source>
</evidence>
<evidence type="ECO:0000305" key="10"/>
<accession>P51804</accession>
<reference key="1">
    <citation type="journal article" date="1995" name="Kidney Int.">
        <title>Cl- channels in basolateral renal medullary vesicles. X. Cloning of a Cl- channel from rabbit outer medulla.</title>
        <authorList>
            <person name="Zimniak L."/>
            <person name="Winters C.J."/>
            <person name="Reeves W.B."/>
            <person name="Andreoli T.E."/>
        </authorList>
    </citation>
    <scope>NUCLEOTIDE SEQUENCE [MRNA]</scope>
    <scope>TISSUE SPECIFICITY</scope>
    <source>
        <tissue>Kidney</tissue>
    </source>
</reference>
<comment type="function">
    <text evidence="5 6">Anion-selective channel permeable to small monovalent anions with ion selectivity for chloride &gt; bromide &gt; nitrate &gt; iodide (By similarity). Forms a homodimeric channel where each subunit has its own ion conduction pathway. May conduct double-barreled currents controlled by two types of gates, two fast gates that control each subunit independently and a slow common gate that opens and shuts off both subunits simultaneously (By similarity). Assembles with the regulatory subunit BSND/Barttin for sorting at the basolateral plasma membrane domain and functional switch to the ion conducting state. CLCNKB:BSND channels display mostly a linear current-voltage relationship controlled by common gate (By similarity). Mediates chloride conductance along nephron segments, namely the thick ascending limb of Henle's loop, convoluted tubule and the collecting duct, contributing to the maintenance of systemic acid-base and electrolyte homeostasis (By similarity). Conducts chloride currents in the stria vascularis of the inner ear to establish the endocochlear potential necessary for normal hearing (By similarity).</text>
</comment>
<comment type="catalytic activity">
    <reaction evidence="5">
        <text>chloride(in) = chloride(out)</text>
        <dbReference type="Rhea" id="RHEA:29823"/>
        <dbReference type="ChEBI" id="CHEBI:17996"/>
    </reaction>
</comment>
<comment type="catalytic activity">
    <reaction evidence="5">
        <text>iodide(out) = iodide(in)</text>
        <dbReference type="Rhea" id="RHEA:66324"/>
        <dbReference type="ChEBI" id="CHEBI:16382"/>
    </reaction>
</comment>
<comment type="catalytic activity">
    <reaction evidence="5">
        <text>nitrate(in) = nitrate(out)</text>
        <dbReference type="Rhea" id="RHEA:34923"/>
        <dbReference type="ChEBI" id="CHEBI:17632"/>
    </reaction>
</comment>
<comment type="catalytic activity">
    <reaction evidence="5">
        <text>bromide(in) = bromide(out)</text>
        <dbReference type="Rhea" id="RHEA:75383"/>
        <dbReference type="ChEBI" id="CHEBI:15858"/>
    </reaction>
</comment>
<comment type="subunit">
    <text evidence="4 5">Homodimer (By similarity). Interacts with BSND (By similarity).</text>
</comment>
<comment type="subcellular location">
    <subcellularLocation>
        <location evidence="5">Basolateral cell membrane</location>
        <topology evidence="7">Multi-pass membrane protein</topology>
    </subcellularLocation>
</comment>
<comment type="tissue specificity">
    <text evidence="9">Expressed predominantly in the kidney.</text>
</comment>
<comment type="PTM">
    <text evidence="5">N-glycosylated.</text>
</comment>
<comment type="similarity">
    <text evidence="10">Belongs to the chloride channel (TC 2.A.49) family. CLCNKB subfamily.</text>
</comment>
<feature type="chain" id="PRO_0000094461" description="Chloride channel protein ClC-Kb">
    <location>
        <begin position="1"/>
        <end position="678"/>
    </location>
</feature>
<feature type="topological domain" description="Cytoplasmic" evidence="2">
    <location>
        <begin position="1"/>
        <end position="50"/>
    </location>
</feature>
<feature type="transmembrane region" description="Helical" evidence="2">
    <location>
        <begin position="51"/>
        <end position="82"/>
    </location>
</feature>
<feature type="transmembrane region" description="Helical" evidence="2">
    <location>
        <begin position="91"/>
        <end position="111"/>
    </location>
</feature>
<feature type="intramembrane region" description="Helical" evidence="2">
    <location>
        <begin position="116"/>
        <end position="127"/>
    </location>
</feature>
<feature type="transmembrane region" description="Helical" evidence="2">
    <location>
        <begin position="141"/>
        <end position="160"/>
    </location>
</feature>
<feature type="transmembrane region" description="Helical" evidence="2">
    <location>
        <begin position="161"/>
        <end position="180"/>
    </location>
</feature>
<feature type="intramembrane region" description="Helical" evidence="2">
    <location>
        <begin position="203"/>
        <end position="224"/>
    </location>
</feature>
<feature type="transmembrane region" description="Helical" evidence="2">
    <location>
        <begin position="236"/>
        <end position="255"/>
    </location>
</feature>
<feature type="transmembrane region" description="Helical" evidence="2">
    <location>
        <begin position="282"/>
        <end position="310"/>
    </location>
</feature>
<feature type="transmembrane region" description="Helical" evidence="2">
    <location>
        <begin position="325"/>
        <end position="342"/>
    </location>
</feature>
<feature type="intramembrane region" description="Helical" evidence="2">
    <location>
        <begin position="349"/>
        <end position="360"/>
    </location>
</feature>
<feature type="transmembrane region" description="Helical" evidence="2">
    <location>
        <begin position="400"/>
        <end position="420"/>
    </location>
</feature>
<feature type="transmembrane region" description="Helical" evidence="2">
    <location>
        <begin position="421"/>
        <end position="440"/>
    </location>
</feature>
<feature type="intramembrane region" description="Helical" evidence="2">
    <location>
        <begin position="464"/>
        <end position="496"/>
    </location>
</feature>
<feature type="transmembrane region" description="Helical" evidence="2">
    <location>
        <begin position="500"/>
        <end position="520"/>
    </location>
</feature>
<feature type="topological domain" description="Cytoplasmic" evidence="2">
    <location>
        <begin position="521"/>
        <end position="678"/>
    </location>
</feature>
<feature type="domain" description="CBS 1" evidence="8">
    <location>
        <begin position="551"/>
        <end position="612"/>
    </location>
</feature>
<feature type="domain" description="CBS 2" evidence="8">
    <location>
        <begin position="620"/>
        <end position="678"/>
    </location>
</feature>
<feature type="binding site" evidence="3">
    <location>
        <position position="121"/>
    </location>
    <ligand>
        <name>chloride</name>
        <dbReference type="ChEBI" id="CHEBI:17996"/>
    </ligand>
</feature>
<feature type="binding site" evidence="1">
    <location>
        <position position="259"/>
    </location>
    <ligand>
        <name>Ca(2+)</name>
        <dbReference type="ChEBI" id="CHEBI:29108"/>
    </ligand>
</feature>
<feature type="binding site" evidence="1">
    <location>
        <position position="261"/>
    </location>
    <ligand>
        <name>Ca(2+)</name>
        <dbReference type="ChEBI" id="CHEBI:29108"/>
    </ligand>
</feature>
<feature type="binding site" evidence="1">
    <location>
        <position position="278"/>
    </location>
    <ligand>
        <name>Ca(2+)</name>
        <dbReference type="ChEBI" id="CHEBI:29108"/>
    </ligand>
</feature>
<feature type="binding site" evidence="1">
    <location>
        <position position="281"/>
    </location>
    <ligand>
        <name>Ca(2+)</name>
        <dbReference type="ChEBI" id="CHEBI:29108"/>
    </ligand>
</feature>
<feature type="binding site" evidence="3">
    <location>
        <position position="426"/>
    </location>
    <ligand>
        <name>chloride</name>
        <dbReference type="ChEBI" id="CHEBI:17996"/>
    </ligand>
</feature>
<feature type="glycosylation site" description="N-linked (GlcNAc...) asparagine" evidence="7">
    <location>
        <position position="364"/>
    </location>
</feature>
<protein>
    <recommendedName>
        <fullName>Chloride channel protein ClC-Kb</fullName>
        <shortName>Chloride channel Kb</shortName>
    </recommendedName>
    <alternativeName>
        <fullName>ClC-K2</fullName>
    </alternativeName>
</protein>
<sequence>MEELVGLREGSSGNPVALRELWSPCPRLRRGIRGGLEWLKQKLFRVGEDWYFLMTLGVLMALISYAMNFALGRVVRAHKWLYREIGDSHLLRYLSWTVYPVALVSFSSGFSQSITPFSGGSGIPELKTILSGVVLENYLDIKNFGAKVVGLSCTLATGSTLFLGKVGPFVHLSVMIAAYLGRVRTKTIGEAENKSKQNEMLVAGAAVGVATVFAAPFSGVLFCIEVMSSHFSVWDYWRGFFAATCGAFMFRLLAVFNSEQETITSLYKTSFPVDVPFDLPEIFFFVLLGAICGVASCAYLYCQRTFLAFTKTNKLISKLMATSKPLYAALAATVLASITYPPGVGRFMASRLSMREHLDTLFDNHSWALLTRNSSPPWPAEPDPQHLWWEWYHPRFTIFGTLAFFLVMKFWMLILATTIPMPAGYFLPIFIIGAAIGRLLGEALSVAFPEGIVAGGVINPIMPGGYALAGAAAFSGAVTHSISTALLAFELTGQIVHALPVLMAVLAANAIAQSCQPSFYDGTIMVKKLPYLPWIRGRPINSHRVIVEHFMRRAISTLARDAALEQVVKVLTSTDEAEYPLVESTESQLLVGIVQRAQLVQALQAEAPARASGQQRCLQDILAGGCPTEPVTLTLSPETSLHQAHNLFELLNLRSLYVTSKGRAVVYVSWVERQHTGF</sequence>